<keyword id="KW-0413">Isomerase</keyword>
<keyword id="KW-0460">Magnesium</keyword>
<keyword id="KW-0479">Metal-binding</keyword>
<keyword id="KW-0597">Phosphoprotein</keyword>
<reference key="1">
    <citation type="journal article" date="2004" name="Proc. Natl. Acad. Sci. U.S.A.">
        <title>Complete genomes of two clinical Staphylococcus aureus strains: evidence for the rapid evolution of virulence and drug resistance.</title>
        <authorList>
            <person name="Holden M.T.G."/>
            <person name="Feil E.J."/>
            <person name="Lindsay J.A."/>
            <person name="Peacock S.J."/>
            <person name="Day N.P.J."/>
            <person name="Enright M.C."/>
            <person name="Foster T.J."/>
            <person name="Moore C.E."/>
            <person name="Hurst L."/>
            <person name="Atkin R."/>
            <person name="Barron A."/>
            <person name="Bason N."/>
            <person name="Bentley S.D."/>
            <person name="Chillingworth C."/>
            <person name="Chillingworth T."/>
            <person name="Churcher C."/>
            <person name="Clark L."/>
            <person name="Corton C."/>
            <person name="Cronin A."/>
            <person name="Doggett J."/>
            <person name="Dowd L."/>
            <person name="Feltwell T."/>
            <person name="Hance Z."/>
            <person name="Harris B."/>
            <person name="Hauser H."/>
            <person name="Holroyd S."/>
            <person name="Jagels K."/>
            <person name="James K.D."/>
            <person name="Lennard N."/>
            <person name="Line A."/>
            <person name="Mayes R."/>
            <person name="Moule S."/>
            <person name="Mungall K."/>
            <person name="Ormond D."/>
            <person name="Quail M.A."/>
            <person name="Rabbinowitsch E."/>
            <person name="Rutherford K.M."/>
            <person name="Sanders M."/>
            <person name="Sharp S."/>
            <person name="Simmonds M."/>
            <person name="Stevens K."/>
            <person name="Whitehead S."/>
            <person name="Barrell B.G."/>
            <person name="Spratt B.G."/>
            <person name="Parkhill J."/>
        </authorList>
    </citation>
    <scope>NUCLEOTIDE SEQUENCE [LARGE SCALE GENOMIC DNA]</scope>
    <source>
        <strain>MSSA476</strain>
    </source>
</reference>
<gene>
    <name evidence="1" type="primary">glmM</name>
    <name type="synonym">femD</name>
    <name type="ordered locus">SAS2063</name>
</gene>
<accession>Q6G7F2</accession>
<name>GLMM_STAAS</name>
<proteinExistence type="inferred from homology"/>
<evidence type="ECO:0000255" key="1">
    <source>
        <dbReference type="HAMAP-Rule" id="MF_01554"/>
    </source>
</evidence>
<feature type="chain" id="PRO_0000147961" description="Phosphoglucosamine mutase">
    <location>
        <begin position="1"/>
        <end position="451"/>
    </location>
</feature>
<feature type="active site" description="Phosphoserine intermediate" evidence="1">
    <location>
        <position position="102"/>
    </location>
</feature>
<feature type="binding site" description="via phosphate group" evidence="1">
    <location>
        <position position="102"/>
    </location>
    <ligand>
        <name>Mg(2+)</name>
        <dbReference type="ChEBI" id="CHEBI:18420"/>
    </ligand>
</feature>
<feature type="binding site" evidence="1">
    <location>
        <position position="242"/>
    </location>
    <ligand>
        <name>Mg(2+)</name>
        <dbReference type="ChEBI" id="CHEBI:18420"/>
    </ligand>
</feature>
<feature type="binding site" evidence="1">
    <location>
        <position position="244"/>
    </location>
    <ligand>
        <name>Mg(2+)</name>
        <dbReference type="ChEBI" id="CHEBI:18420"/>
    </ligand>
</feature>
<feature type="binding site" evidence="1">
    <location>
        <position position="246"/>
    </location>
    <ligand>
        <name>Mg(2+)</name>
        <dbReference type="ChEBI" id="CHEBI:18420"/>
    </ligand>
</feature>
<feature type="modified residue" description="Phosphoserine" evidence="1">
    <location>
        <position position="102"/>
    </location>
</feature>
<organism>
    <name type="scientific">Staphylococcus aureus (strain MSSA476)</name>
    <dbReference type="NCBI Taxonomy" id="282459"/>
    <lineage>
        <taxon>Bacteria</taxon>
        <taxon>Bacillati</taxon>
        <taxon>Bacillota</taxon>
        <taxon>Bacilli</taxon>
        <taxon>Bacillales</taxon>
        <taxon>Staphylococcaceae</taxon>
        <taxon>Staphylococcus</taxon>
    </lineage>
</organism>
<protein>
    <recommendedName>
        <fullName evidence="1">Phosphoglucosamine mutase</fullName>
        <ecNumber evidence="1">5.4.2.10</ecNumber>
    </recommendedName>
</protein>
<sequence>MGKYFGTDGVRGVANQELTPELAFKLGRYGGYVLAHNKGEKHPRVLVGRDTRVSGEMLESALIAGLISIGAEVMRLGIISTPGVAYLTRDMGAELGVMISASHNPVADNGIKFFGSDGFKLSDEQENEIEALLDQENPELPRPVGNDIVHYSDYFEGAQKYLSYLKSTVDVNFEGLKIVLDGANGSTSSLAPFLFGDLEADTETIGCSPDGYNINEKCGSTHPEKLAEKVVETESDFGLAFDGDGDRIIAVDENGQIVDGDQIMFIIGQEMHKNQELNNDMIVSTVMSNLGFYKALEQEGIKSNKTKVGDRYVVEEMRRGNYNLGGEQSGHIVMMDYNTTGDGLLTGIQLASVIKMTGKSLSELAGQMKKYPQSLINVRVTDKYRVEENVDVKEVMTKVEVEMNGEGRILVRPSGTEPLVRVMVEAATDEDAERFAQQIADVVQDKMGLDK</sequence>
<dbReference type="EC" id="5.4.2.10" evidence="1"/>
<dbReference type="EMBL" id="BX571857">
    <property type="protein sequence ID" value="CAG43871.1"/>
    <property type="molecule type" value="Genomic_DNA"/>
</dbReference>
<dbReference type="RefSeq" id="WP_000521495.1">
    <property type="nucleotide sequence ID" value="NC_002953.3"/>
</dbReference>
<dbReference type="SMR" id="Q6G7F2"/>
<dbReference type="KEGG" id="sas:SAS2063"/>
<dbReference type="HOGENOM" id="CLU_016950_7_0_9"/>
<dbReference type="GO" id="GO:0005829">
    <property type="term" value="C:cytosol"/>
    <property type="evidence" value="ECO:0007669"/>
    <property type="project" value="TreeGrafter"/>
</dbReference>
<dbReference type="GO" id="GO:0000287">
    <property type="term" value="F:magnesium ion binding"/>
    <property type="evidence" value="ECO:0007669"/>
    <property type="project" value="UniProtKB-UniRule"/>
</dbReference>
<dbReference type="GO" id="GO:0008966">
    <property type="term" value="F:phosphoglucosamine mutase activity"/>
    <property type="evidence" value="ECO:0007669"/>
    <property type="project" value="UniProtKB-UniRule"/>
</dbReference>
<dbReference type="GO" id="GO:0004615">
    <property type="term" value="F:phosphomannomutase activity"/>
    <property type="evidence" value="ECO:0007669"/>
    <property type="project" value="TreeGrafter"/>
</dbReference>
<dbReference type="GO" id="GO:0005975">
    <property type="term" value="P:carbohydrate metabolic process"/>
    <property type="evidence" value="ECO:0007669"/>
    <property type="project" value="InterPro"/>
</dbReference>
<dbReference type="GO" id="GO:0009252">
    <property type="term" value="P:peptidoglycan biosynthetic process"/>
    <property type="evidence" value="ECO:0007669"/>
    <property type="project" value="TreeGrafter"/>
</dbReference>
<dbReference type="GO" id="GO:0006048">
    <property type="term" value="P:UDP-N-acetylglucosamine biosynthetic process"/>
    <property type="evidence" value="ECO:0007669"/>
    <property type="project" value="TreeGrafter"/>
</dbReference>
<dbReference type="CDD" id="cd05802">
    <property type="entry name" value="GlmM"/>
    <property type="match status" value="1"/>
</dbReference>
<dbReference type="FunFam" id="3.30.310.50:FF:000001">
    <property type="entry name" value="Phosphoglucosamine mutase"/>
    <property type="match status" value="1"/>
</dbReference>
<dbReference type="FunFam" id="3.40.120.10:FF:000001">
    <property type="entry name" value="Phosphoglucosamine mutase"/>
    <property type="match status" value="1"/>
</dbReference>
<dbReference type="FunFam" id="3.40.120.10:FF:000002">
    <property type="entry name" value="Phosphoglucosamine mutase"/>
    <property type="match status" value="1"/>
</dbReference>
<dbReference type="Gene3D" id="3.40.120.10">
    <property type="entry name" value="Alpha-D-Glucose-1,6-Bisphosphate, subunit A, domain 3"/>
    <property type="match status" value="3"/>
</dbReference>
<dbReference type="Gene3D" id="3.30.310.50">
    <property type="entry name" value="Alpha-D-phosphohexomutase, C-terminal domain"/>
    <property type="match status" value="1"/>
</dbReference>
<dbReference type="HAMAP" id="MF_01554_B">
    <property type="entry name" value="GlmM_B"/>
    <property type="match status" value="1"/>
</dbReference>
<dbReference type="InterPro" id="IPR005844">
    <property type="entry name" value="A-D-PHexomutase_a/b/a-I"/>
</dbReference>
<dbReference type="InterPro" id="IPR016055">
    <property type="entry name" value="A-D-PHexomutase_a/b/a-I/II/III"/>
</dbReference>
<dbReference type="InterPro" id="IPR005845">
    <property type="entry name" value="A-D-PHexomutase_a/b/a-II"/>
</dbReference>
<dbReference type="InterPro" id="IPR005846">
    <property type="entry name" value="A-D-PHexomutase_a/b/a-III"/>
</dbReference>
<dbReference type="InterPro" id="IPR005843">
    <property type="entry name" value="A-D-PHexomutase_C"/>
</dbReference>
<dbReference type="InterPro" id="IPR036900">
    <property type="entry name" value="A-D-PHexomutase_C_sf"/>
</dbReference>
<dbReference type="InterPro" id="IPR016066">
    <property type="entry name" value="A-D-PHexomutase_CS"/>
</dbReference>
<dbReference type="InterPro" id="IPR005841">
    <property type="entry name" value="Alpha-D-phosphohexomutase_SF"/>
</dbReference>
<dbReference type="InterPro" id="IPR006352">
    <property type="entry name" value="GlmM_bact"/>
</dbReference>
<dbReference type="InterPro" id="IPR050060">
    <property type="entry name" value="Phosphoglucosamine_mutase"/>
</dbReference>
<dbReference type="NCBIfam" id="TIGR01455">
    <property type="entry name" value="glmM"/>
    <property type="match status" value="1"/>
</dbReference>
<dbReference type="NCBIfam" id="NF008139">
    <property type="entry name" value="PRK10887.1"/>
    <property type="match status" value="1"/>
</dbReference>
<dbReference type="PANTHER" id="PTHR42946:SF1">
    <property type="entry name" value="PHOSPHOGLUCOMUTASE (ALPHA-D-GLUCOSE-1,6-BISPHOSPHATE-DEPENDENT)"/>
    <property type="match status" value="1"/>
</dbReference>
<dbReference type="PANTHER" id="PTHR42946">
    <property type="entry name" value="PHOSPHOHEXOSE MUTASE"/>
    <property type="match status" value="1"/>
</dbReference>
<dbReference type="Pfam" id="PF02878">
    <property type="entry name" value="PGM_PMM_I"/>
    <property type="match status" value="1"/>
</dbReference>
<dbReference type="Pfam" id="PF02879">
    <property type="entry name" value="PGM_PMM_II"/>
    <property type="match status" value="1"/>
</dbReference>
<dbReference type="Pfam" id="PF02880">
    <property type="entry name" value="PGM_PMM_III"/>
    <property type="match status" value="1"/>
</dbReference>
<dbReference type="Pfam" id="PF00408">
    <property type="entry name" value="PGM_PMM_IV"/>
    <property type="match status" value="1"/>
</dbReference>
<dbReference type="PRINTS" id="PR00509">
    <property type="entry name" value="PGMPMM"/>
</dbReference>
<dbReference type="SUPFAM" id="SSF55957">
    <property type="entry name" value="Phosphoglucomutase, C-terminal domain"/>
    <property type="match status" value="1"/>
</dbReference>
<dbReference type="SUPFAM" id="SSF53738">
    <property type="entry name" value="Phosphoglucomutase, first 3 domains"/>
    <property type="match status" value="3"/>
</dbReference>
<dbReference type="PROSITE" id="PS00710">
    <property type="entry name" value="PGM_PMM"/>
    <property type="match status" value="1"/>
</dbReference>
<comment type="function">
    <text evidence="1">Catalyzes the conversion of glucosamine-6-phosphate to glucosamine-1-phosphate.</text>
</comment>
<comment type="catalytic activity">
    <reaction evidence="1">
        <text>alpha-D-glucosamine 1-phosphate = D-glucosamine 6-phosphate</text>
        <dbReference type="Rhea" id="RHEA:23424"/>
        <dbReference type="ChEBI" id="CHEBI:58516"/>
        <dbReference type="ChEBI" id="CHEBI:58725"/>
        <dbReference type="EC" id="5.4.2.10"/>
    </reaction>
</comment>
<comment type="cofactor">
    <cofactor evidence="1">
        <name>Mg(2+)</name>
        <dbReference type="ChEBI" id="CHEBI:18420"/>
    </cofactor>
    <text evidence="1">Binds 1 Mg(2+) ion per subunit.</text>
</comment>
<comment type="PTM">
    <text evidence="1">Activated by phosphorylation.</text>
</comment>
<comment type="similarity">
    <text evidence="1">Belongs to the phosphohexose mutase family.</text>
</comment>